<name>SYE_STAA1</name>
<reference key="1">
    <citation type="journal article" date="2008" name="Antimicrob. Agents Chemother.">
        <title>Mutated response regulator graR is responsible for phenotypic conversion of Staphylococcus aureus from heterogeneous vancomycin-intermediate resistance to vancomycin-intermediate resistance.</title>
        <authorList>
            <person name="Neoh H.-M."/>
            <person name="Cui L."/>
            <person name="Yuzawa H."/>
            <person name="Takeuchi F."/>
            <person name="Matsuo M."/>
            <person name="Hiramatsu K."/>
        </authorList>
    </citation>
    <scope>NUCLEOTIDE SEQUENCE [LARGE SCALE GENOMIC DNA]</scope>
    <source>
        <strain>Mu3 / ATCC 700698</strain>
    </source>
</reference>
<dbReference type="EC" id="6.1.1.17" evidence="1"/>
<dbReference type="EMBL" id="AP009324">
    <property type="protein sequence ID" value="BAF77408.1"/>
    <property type="molecule type" value="Genomic_DNA"/>
</dbReference>
<dbReference type="RefSeq" id="WP_001283792.1">
    <property type="nucleotide sequence ID" value="NZ_CTYB01000013.1"/>
</dbReference>
<dbReference type="SMR" id="A7WYU4"/>
<dbReference type="KEGG" id="saw:SAHV_0525"/>
<dbReference type="HOGENOM" id="CLU_015768_6_1_9"/>
<dbReference type="GO" id="GO:0005829">
    <property type="term" value="C:cytosol"/>
    <property type="evidence" value="ECO:0007669"/>
    <property type="project" value="TreeGrafter"/>
</dbReference>
<dbReference type="GO" id="GO:0005524">
    <property type="term" value="F:ATP binding"/>
    <property type="evidence" value="ECO:0007669"/>
    <property type="project" value="UniProtKB-UniRule"/>
</dbReference>
<dbReference type="GO" id="GO:0004818">
    <property type="term" value="F:glutamate-tRNA ligase activity"/>
    <property type="evidence" value="ECO:0007669"/>
    <property type="project" value="UniProtKB-UniRule"/>
</dbReference>
<dbReference type="GO" id="GO:0000049">
    <property type="term" value="F:tRNA binding"/>
    <property type="evidence" value="ECO:0007669"/>
    <property type="project" value="InterPro"/>
</dbReference>
<dbReference type="GO" id="GO:0008270">
    <property type="term" value="F:zinc ion binding"/>
    <property type="evidence" value="ECO:0007669"/>
    <property type="project" value="InterPro"/>
</dbReference>
<dbReference type="GO" id="GO:0006424">
    <property type="term" value="P:glutamyl-tRNA aminoacylation"/>
    <property type="evidence" value="ECO:0007669"/>
    <property type="project" value="UniProtKB-UniRule"/>
</dbReference>
<dbReference type="CDD" id="cd00808">
    <property type="entry name" value="GluRS_core"/>
    <property type="match status" value="1"/>
</dbReference>
<dbReference type="FunFam" id="1.10.10.350:FF:000002">
    <property type="entry name" value="Glutamate--tRNA ligase"/>
    <property type="match status" value="1"/>
</dbReference>
<dbReference type="FunFam" id="3.40.50.620:FF:000007">
    <property type="entry name" value="Glutamate--tRNA ligase"/>
    <property type="match status" value="1"/>
</dbReference>
<dbReference type="Gene3D" id="1.10.10.350">
    <property type="match status" value="1"/>
</dbReference>
<dbReference type="Gene3D" id="3.40.50.620">
    <property type="entry name" value="HUPs"/>
    <property type="match status" value="1"/>
</dbReference>
<dbReference type="HAMAP" id="MF_00022">
    <property type="entry name" value="Glu_tRNA_synth_type1"/>
    <property type="match status" value="1"/>
</dbReference>
<dbReference type="InterPro" id="IPR045462">
    <property type="entry name" value="aa-tRNA-synth_I_cd-bd"/>
</dbReference>
<dbReference type="InterPro" id="IPR020751">
    <property type="entry name" value="aa-tRNA-synth_I_codon-bd_sub2"/>
</dbReference>
<dbReference type="InterPro" id="IPR001412">
    <property type="entry name" value="aa-tRNA-synth_I_CS"/>
</dbReference>
<dbReference type="InterPro" id="IPR008925">
    <property type="entry name" value="aa_tRNA-synth_I_cd-bd_sf"/>
</dbReference>
<dbReference type="InterPro" id="IPR004527">
    <property type="entry name" value="Glu-tRNA-ligase_bac/mito"/>
</dbReference>
<dbReference type="InterPro" id="IPR000924">
    <property type="entry name" value="Glu/Gln-tRNA-synth"/>
</dbReference>
<dbReference type="InterPro" id="IPR020058">
    <property type="entry name" value="Glu/Gln-tRNA-synth_Ib_cat-dom"/>
</dbReference>
<dbReference type="InterPro" id="IPR049940">
    <property type="entry name" value="GluQ/Sye"/>
</dbReference>
<dbReference type="InterPro" id="IPR033910">
    <property type="entry name" value="GluRS_core"/>
</dbReference>
<dbReference type="InterPro" id="IPR014729">
    <property type="entry name" value="Rossmann-like_a/b/a_fold"/>
</dbReference>
<dbReference type="NCBIfam" id="TIGR00464">
    <property type="entry name" value="gltX_bact"/>
    <property type="match status" value="1"/>
</dbReference>
<dbReference type="PANTHER" id="PTHR43311">
    <property type="entry name" value="GLUTAMATE--TRNA LIGASE"/>
    <property type="match status" value="1"/>
</dbReference>
<dbReference type="PANTHER" id="PTHR43311:SF2">
    <property type="entry name" value="GLUTAMATE--TRNA LIGASE, MITOCHONDRIAL-RELATED"/>
    <property type="match status" value="1"/>
</dbReference>
<dbReference type="Pfam" id="PF19269">
    <property type="entry name" value="Anticodon_2"/>
    <property type="match status" value="1"/>
</dbReference>
<dbReference type="Pfam" id="PF00749">
    <property type="entry name" value="tRNA-synt_1c"/>
    <property type="match status" value="1"/>
</dbReference>
<dbReference type="PRINTS" id="PR00987">
    <property type="entry name" value="TRNASYNTHGLU"/>
</dbReference>
<dbReference type="SUPFAM" id="SSF48163">
    <property type="entry name" value="An anticodon-binding domain of class I aminoacyl-tRNA synthetases"/>
    <property type="match status" value="1"/>
</dbReference>
<dbReference type="SUPFAM" id="SSF52374">
    <property type="entry name" value="Nucleotidylyl transferase"/>
    <property type="match status" value="1"/>
</dbReference>
<dbReference type="PROSITE" id="PS00178">
    <property type="entry name" value="AA_TRNA_LIGASE_I"/>
    <property type="match status" value="1"/>
</dbReference>
<accession>A7WYU4</accession>
<comment type="function">
    <text evidence="1">Catalyzes the attachment of glutamate to tRNA(Glu) in a two-step reaction: glutamate is first activated by ATP to form Glu-AMP and then transferred to the acceptor end of tRNA(Glu).</text>
</comment>
<comment type="catalytic activity">
    <reaction evidence="1">
        <text>tRNA(Glu) + L-glutamate + ATP = L-glutamyl-tRNA(Glu) + AMP + diphosphate</text>
        <dbReference type="Rhea" id="RHEA:23540"/>
        <dbReference type="Rhea" id="RHEA-COMP:9663"/>
        <dbReference type="Rhea" id="RHEA-COMP:9680"/>
        <dbReference type="ChEBI" id="CHEBI:29985"/>
        <dbReference type="ChEBI" id="CHEBI:30616"/>
        <dbReference type="ChEBI" id="CHEBI:33019"/>
        <dbReference type="ChEBI" id="CHEBI:78442"/>
        <dbReference type="ChEBI" id="CHEBI:78520"/>
        <dbReference type="ChEBI" id="CHEBI:456215"/>
        <dbReference type="EC" id="6.1.1.17"/>
    </reaction>
</comment>
<comment type="subunit">
    <text evidence="1">Monomer.</text>
</comment>
<comment type="subcellular location">
    <subcellularLocation>
        <location evidence="1">Cytoplasm</location>
    </subcellularLocation>
</comment>
<comment type="similarity">
    <text evidence="1">Belongs to the class-I aminoacyl-tRNA synthetase family. Glutamate--tRNA ligase type 1 subfamily.</text>
</comment>
<proteinExistence type="inferred from homology"/>
<protein>
    <recommendedName>
        <fullName evidence="1">Glutamate--tRNA ligase</fullName>
        <ecNumber evidence="1">6.1.1.17</ecNumber>
    </recommendedName>
    <alternativeName>
        <fullName evidence="1">Glutamyl-tRNA synthetase</fullName>
        <shortName evidence="1">GluRS</shortName>
    </alternativeName>
</protein>
<gene>
    <name evidence="1" type="primary">gltX</name>
    <name type="ordered locus">SAHV_0525</name>
</gene>
<sequence>MSDRIRVRYAPSPTGYLHIGNARTALFNYLYAKHYNGDFVIRIEDTDKKRNLEDGETSQFDNLKWLGLDWDESVDKDNGYGPYRQSERQHIYQPLIDQLLAEDKAYKCYMTEEELEAEREAQIARGEMPRYGGQHAHLTEEQRQQFEAEGRQPSIRFRVPQNQTYSFDDMVKGNISFDSNGIGDWVIVKKDGIPTYNFAVAIDDHYMQISDVIRGDDHISNTPKQIMIYEAFGWEPPRFGHMSLIVNEERKKLSKRDGQILQFIEQYRDLGYLPEALFNFIALLGWSPEGEEEIFSKEEFIKIFDEKRLSKSPAFFDKQKLAWVNNQYMKQKDTETVFQLALPHLIKANLIPEVPSEEDLSWGRKLIALYQKEMSYAGEIVPLSEMFFKEMPALGEEEQQVINGEQVPELMTHLFSKLEALEPFEAAEIKKTIKEVQKETGIKGKQLFMPIRVAVTGQMHGPELPNTIEVLGKEKVLNRLKQYK</sequence>
<organism>
    <name type="scientific">Staphylococcus aureus (strain Mu3 / ATCC 700698)</name>
    <dbReference type="NCBI Taxonomy" id="418127"/>
    <lineage>
        <taxon>Bacteria</taxon>
        <taxon>Bacillati</taxon>
        <taxon>Bacillota</taxon>
        <taxon>Bacilli</taxon>
        <taxon>Bacillales</taxon>
        <taxon>Staphylococcaceae</taxon>
        <taxon>Staphylococcus</taxon>
    </lineage>
</organism>
<feature type="chain" id="PRO_1000001968" description="Glutamate--tRNA ligase">
    <location>
        <begin position="1"/>
        <end position="484"/>
    </location>
</feature>
<feature type="short sequence motif" description="'HIGH' region" evidence="1">
    <location>
        <begin position="11"/>
        <end position="21"/>
    </location>
</feature>
<feature type="short sequence motif" description="'KMSKS' region" evidence="1">
    <location>
        <begin position="252"/>
        <end position="256"/>
    </location>
</feature>
<feature type="binding site" evidence="1">
    <location>
        <position position="255"/>
    </location>
    <ligand>
        <name>ATP</name>
        <dbReference type="ChEBI" id="CHEBI:30616"/>
    </ligand>
</feature>
<keyword id="KW-0030">Aminoacyl-tRNA synthetase</keyword>
<keyword id="KW-0067">ATP-binding</keyword>
<keyword id="KW-0963">Cytoplasm</keyword>
<keyword id="KW-0436">Ligase</keyword>
<keyword id="KW-0547">Nucleotide-binding</keyword>
<keyword id="KW-0648">Protein biosynthesis</keyword>
<evidence type="ECO:0000255" key="1">
    <source>
        <dbReference type="HAMAP-Rule" id="MF_00022"/>
    </source>
</evidence>